<protein>
    <recommendedName>
        <fullName>Putative uncharacterized protein YBR051W</fullName>
    </recommendedName>
</protein>
<proteinExistence type="uncertain"/>
<dbReference type="EMBL" id="Z35919">
    <property type="protein sequence ID" value="CAA84993.1"/>
    <property type="molecule type" value="Genomic_DNA"/>
</dbReference>
<dbReference type="EMBL" id="Z46260">
    <property type="protein sequence ID" value="CAA86394.1"/>
    <property type="molecule type" value="Genomic_DNA"/>
</dbReference>
<dbReference type="PIR" id="S45909">
    <property type="entry name" value="S45909"/>
</dbReference>
<dbReference type="STRING" id="4932.YBR051W"/>
<dbReference type="PaxDb" id="4932-YBR051W"/>
<dbReference type="EnsemblFungi" id="YBR051W_mRNA">
    <property type="protein sequence ID" value="YBR051W"/>
    <property type="gene ID" value="YBR051W"/>
</dbReference>
<dbReference type="AGR" id="SGD:S000000255"/>
<dbReference type="SGD" id="S000000255">
    <property type="gene designation" value="YBR051W"/>
</dbReference>
<dbReference type="HOGENOM" id="CLU_2098734_0_0_1"/>
<dbReference type="GO" id="GO:0016020">
    <property type="term" value="C:membrane"/>
    <property type="evidence" value="ECO:0007669"/>
    <property type="project" value="UniProtKB-SubCell"/>
</dbReference>
<reference key="1">
    <citation type="journal article" date="1995" name="Yeast">
        <title>Sequence and analysis of 24 kb on chromosome II of Saccharomyces cerevisiae.</title>
        <authorList>
            <person name="Aljinovic G."/>
            <person name="Pohl T.M."/>
        </authorList>
    </citation>
    <scope>NUCLEOTIDE SEQUENCE [GENOMIC DNA]</scope>
    <source>
        <strain>ATCC 204508 / S288c</strain>
    </source>
</reference>
<reference key="2">
    <citation type="journal article" date="1994" name="EMBO J.">
        <title>Complete DNA sequence of yeast chromosome II.</title>
        <authorList>
            <person name="Feldmann H."/>
            <person name="Aigle M."/>
            <person name="Aljinovic G."/>
            <person name="Andre B."/>
            <person name="Baclet M.C."/>
            <person name="Barthe C."/>
            <person name="Baur A."/>
            <person name="Becam A.-M."/>
            <person name="Biteau N."/>
            <person name="Boles E."/>
            <person name="Brandt T."/>
            <person name="Brendel M."/>
            <person name="Brueckner M."/>
            <person name="Bussereau F."/>
            <person name="Christiansen C."/>
            <person name="Contreras R."/>
            <person name="Crouzet M."/>
            <person name="Cziepluch C."/>
            <person name="Demolis N."/>
            <person name="Delaveau T."/>
            <person name="Doignon F."/>
            <person name="Domdey H."/>
            <person name="Duesterhus S."/>
            <person name="Dubois E."/>
            <person name="Dujon B."/>
            <person name="El Bakkoury M."/>
            <person name="Entian K.-D."/>
            <person name="Feuermann M."/>
            <person name="Fiers W."/>
            <person name="Fobo G.M."/>
            <person name="Fritz C."/>
            <person name="Gassenhuber J."/>
            <person name="Glansdorff N."/>
            <person name="Goffeau A."/>
            <person name="Grivell L.A."/>
            <person name="de Haan M."/>
            <person name="Hein C."/>
            <person name="Herbert C.J."/>
            <person name="Hollenberg C.P."/>
            <person name="Holmstroem K."/>
            <person name="Jacq C."/>
            <person name="Jacquet M."/>
            <person name="Jauniaux J.-C."/>
            <person name="Jonniaux J.-L."/>
            <person name="Kallesoee T."/>
            <person name="Kiesau P."/>
            <person name="Kirchrath L."/>
            <person name="Koetter P."/>
            <person name="Korol S."/>
            <person name="Liebl S."/>
            <person name="Logghe M."/>
            <person name="Lohan A.J.E."/>
            <person name="Louis E.J."/>
            <person name="Li Z.Y."/>
            <person name="Maat M.J."/>
            <person name="Mallet L."/>
            <person name="Mannhaupt G."/>
            <person name="Messenguy F."/>
            <person name="Miosga T."/>
            <person name="Molemans F."/>
            <person name="Mueller S."/>
            <person name="Nasr F."/>
            <person name="Obermaier B."/>
            <person name="Perea J."/>
            <person name="Pierard A."/>
            <person name="Piravandi E."/>
            <person name="Pohl F.M."/>
            <person name="Pohl T.M."/>
            <person name="Potier S."/>
            <person name="Proft M."/>
            <person name="Purnelle B."/>
            <person name="Ramezani Rad M."/>
            <person name="Rieger M."/>
            <person name="Rose M."/>
            <person name="Schaaff-Gerstenschlaeger I."/>
            <person name="Scherens B."/>
            <person name="Schwarzlose C."/>
            <person name="Skala J."/>
            <person name="Slonimski P.P."/>
            <person name="Smits P.H.M."/>
            <person name="Souciet J.-L."/>
            <person name="Steensma H.Y."/>
            <person name="Stucka R."/>
            <person name="Urrestarazu L.A."/>
            <person name="van der Aart Q.J.M."/>
            <person name="Van Dyck L."/>
            <person name="Vassarotti A."/>
            <person name="Vetter I."/>
            <person name="Vierendeels F."/>
            <person name="Vissers S."/>
            <person name="Wagner G."/>
            <person name="de Wergifosse P."/>
            <person name="Wolfe K.H."/>
            <person name="Zagulski M."/>
            <person name="Zimmermann F.K."/>
            <person name="Mewes H.-W."/>
            <person name="Kleine K."/>
        </authorList>
    </citation>
    <scope>NUCLEOTIDE SEQUENCE [LARGE SCALE GENOMIC DNA]</scope>
    <source>
        <strain>ATCC 204508 / S288c</strain>
    </source>
</reference>
<reference key="3">
    <citation type="journal article" date="2014" name="G3 (Bethesda)">
        <title>The reference genome sequence of Saccharomyces cerevisiae: Then and now.</title>
        <authorList>
            <person name="Engel S.R."/>
            <person name="Dietrich F.S."/>
            <person name="Fisk D.G."/>
            <person name="Binkley G."/>
            <person name="Balakrishnan R."/>
            <person name="Costanzo M.C."/>
            <person name="Dwight S.S."/>
            <person name="Hitz B.C."/>
            <person name="Karra K."/>
            <person name="Nash R.S."/>
            <person name="Weng S."/>
            <person name="Wong E.D."/>
            <person name="Lloyd P."/>
            <person name="Skrzypek M.S."/>
            <person name="Miyasato S.R."/>
            <person name="Simison M."/>
            <person name="Cherry J.M."/>
        </authorList>
    </citation>
    <scope>GENOME REANNOTATION</scope>
    <source>
        <strain>ATCC 204508 / S288c</strain>
    </source>
</reference>
<keyword id="KW-0472">Membrane</keyword>
<keyword id="KW-0812">Transmembrane</keyword>
<keyword id="KW-1133">Transmembrane helix</keyword>
<name>YBQ1_YEAST</name>
<sequence>MHILFLFIFHCLAFKDLIFFKQYVPFAAAGGYPISFLFIKVLTASTNLLLSSSSGGSWNKLSKESQLLKVILTHFLVPIFFFLFQYIILSEDRQQERQPKFRDNAKFDGHAKTCHI</sequence>
<accession>P38233</accession>
<organism>
    <name type="scientific">Saccharomyces cerevisiae (strain ATCC 204508 / S288c)</name>
    <name type="common">Baker's yeast</name>
    <dbReference type="NCBI Taxonomy" id="559292"/>
    <lineage>
        <taxon>Eukaryota</taxon>
        <taxon>Fungi</taxon>
        <taxon>Dikarya</taxon>
        <taxon>Ascomycota</taxon>
        <taxon>Saccharomycotina</taxon>
        <taxon>Saccharomycetes</taxon>
        <taxon>Saccharomycetales</taxon>
        <taxon>Saccharomycetaceae</taxon>
        <taxon>Saccharomyces</taxon>
    </lineage>
</organism>
<gene>
    <name type="ordered locus">YBR051W</name>
    <name type="ORF">YBR0504A</name>
</gene>
<comment type="subcellular location">
    <subcellularLocation>
        <location evidence="2">Membrane</location>
        <topology evidence="2">Multi-pass membrane protein</topology>
    </subcellularLocation>
</comment>
<comment type="miscellaneous">
    <text evidence="2">Partially overlaps REG2.</text>
</comment>
<comment type="caution">
    <text evidence="3">Product of a dubious gene prediction unlikely to encode a functional protein. Because of that it is not part of the S.cerevisiae S288c complete/reference proteome set.</text>
</comment>
<evidence type="ECO:0000255" key="1"/>
<evidence type="ECO:0000305" key="2"/>
<evidence type="ECO:0000305" key="3">
    <source>
    </source>
</evidence>
<feature type="chain" id="PRO_0000202475" description="Putative uncharacterized protein YBR051W">
    <location>
        <begin position="1"/>
        <end position="116"/>
    </location>
</feature>
<feature type="transmembrane region" description="Helical" evidence="1">
    <location>
        <begin position="24"/>
        <end position="44"/>
    </location>
</feature>
<feature type="transmembrane region" description="Helical" evidence="1">
    <location>
        <begin position="70"/>
        <end position="90"/>
    </location>
</feature>